<comment type="function">
    <text evidence="1">DNA-dependent RNA polymerase catalyzes the transcription of DNA into RNA using the four ribonucleoside triphosphates as substrates.</text>
</comment>
<comment type="catalytic activity">
    <reaction evidence="1">
        <text>RNA(n) + a ribonucleoside 5'-triphosphate = RNA(n+1) + diphosphate</text>
        <dbReference type="Rhea" id="RHEA:21248"/>
        <dbReference type="Rhea" id="RHEA-COMP:14527"/>
        <dbReference type="Rhea" id="RHEA-COMP:17342"/>
        <dbReference type="ChEBI" id="CHEBI:33019"/>
        <dbReference type="ChEBI" id="CHEBI:61557"/>
        <dbReference type="ChEBI" id="CHEBI:140395"/>
        <dbReference type="EC" id="2.7.7.6"/>
    </reaction>
</comment>
<comment type="subunit">
    <text evidence="1">The RNAP catalytic core consists of 2 alpha, 1 beta, 1 beta' and 1 omega subunit. When a sigma factor is associated with the core the holoenzyme is formed, which can initiate transcription.</text>
</comment>
<comment type="similarity">
    <text evidence="1">Belongs to the RNA polymerase beta chain family.</text>
</comment>
<name>RPOB_BAUCH</name>
<keyword id="KW-0240">DNA-directed RNA polymerase</keyword>
<keyword id="KW-0548">Nucleotidyltransferase</keyword>
<keyword id="KW-1185">Reference proteome</keyword>
<keyword id="KW-0804">Transcription</keyword>
<keyword id="KW-0808">Transferase</keyword>
<proteinExistence type="inferred from homology"/>
<organism>
    <name type="scientific">Baumannia cicadellinicola subsp. Homalodisca coagulata</name>
    <dbReference type="NCBI Taxonomy" id="374463"/>
    <lineage>
        <taxon>Bacteria</taxon>
        <taxon>Pseudomonadati</taxon>
        <taxon>Pseudomonadota</taxon>
        <taxon>Gammaproteobacteria</taxon>
        <taxon>Candidatus Palibaumannia</taxon>
    </lineage>
</organism>
<dbReference type="EC" id="2.7.7.6" evidence="1"/>
<dbReference type="EMBL" id="CP000238">
    <property type="protein sequence ID" value="ABF13801.1"/>
    <property type="molecule type" value="Genomic_DNA"/>
</dbReference>
<dbReference type="RefSeq" id="WP_011520670.1">
    <property type="nucleotide sequence ID" value="NC_007984.1"/>
</dbReference>
<dbReference type="SMR" id="Q1LSX7"/>
<dbReference type="STRING" id="374463.BCI_0502"/>
<dbReference type="KEGG" id="bci:BCI_0502"/>
<dbReference type="HOGENOM" id="CLU_000524_4_3_6"/>
<dbReference type="OrthoDB" id="9803954at2"/>
<dbReference type="Proteomes" id="UP000002427">
    <property type="component" value="Chromosome"/>
</dbReference>
<dbReference type="GO" id="GO:0000428">
    <property type="term" value="C:DNA-directed RNA polymerase complex"/>
    <property type="evidence" value="ECO:0007669"/>
    <property type="project" value="UniProtKB-KW"/>
</dbReference>
<dbReference type="GO" id="GO:0003677">
    <property type="term" value="F:DNA binding"/>
    <property type="evidence" value="ECO:0007669"/>
    <property type="project" value="UniProtKB-UniRule"/>
</dbReference>
<dbReference type="GO" id="GO:0003899">
    <property type="term" value="F:DNA-directed RNA polymerase activity"/>
    <property type="evidence" value="ECO:0007669"/>
    <property type="project" value="UniProtKB-UniRule"/>
</dbReference>
<dbReference type="GO" id="GO:0032549">
    <property type="term" value="F:ribonucleoside binding"/>
    <property type="evidence" value="ECO:0007669"/>
    <property type="project" value="InterPro"/>
</dbReference>
<dbReference type="GO" id="GO:0006351">
    <property type="term" value="P:DNA-templated transcription"/>
    <property type="evidence" value="ECO:0007669"/>
    <property type="project" value="UniProtKB-UniRule"/>
</dbReference>
<dbReference type="CDD" id="cd00653">
    <property type="entry name" value="RNA_pol_B_RPB2"/>
    <property type="match status" value="1"/>
</dbReference>
<dbReference type="FunFam" id="2.40.270.10:FF:000004">
    <property type="entry name" value="DNA-directed RNA polymerase subunit beta"/>
    <property type="match status" value="1"/>
</dbReference>
<dbReference type="FunFam" id="2.40.50.100:FF:000006">
    <property type="entry name" value="DNA-directed RNA polymerase subunit beta"/>
    <property type="match status" value="1"/>
</dbReference>
<dbReference type="FunFam" id="2.40.50.150:FF:000001">
    <property type="entry name" value="DNA-directed RNA polymerase subunit beta"/>
    <property type="match status" value="1"/>
</dbReference>
<dbReference type="FunFam" id="3.90.1100.10:FF:000002">
    <property type="entry name" value="DNA-directed RNA polymerase subunit beta"/>
    <property type="match status" value="1"/>
</dbReference>
<dbReference type="FunFam" id="3.90.1110.10:FF:000001">
    <property type="entry name" value="DNA-directed RNA polymerase subunit beta"/>
    <property type="match status" value="1"/>
</dbReference>
<dbReference type="FunFam" id="3.90.1110.10:FF:000004">
    <property type="entry name" value="DNA-directed RNA polymerase subunit beta"/>
    <property type="match status" value="1"/>
</dbReference>
<dbReference type="FunFam" id="3.90.1800.10:FF:000001">
    <property type="entry name" value="DNA-directed RNA polymerase subunit beta"/>
    <property type="match status" value="1"/>
</dbReference>
<dbReference type="Gene3D" id="2.40.50.100">
    <property type="match status" value="1"/>
</dbReference>
<dbReference type="Gene3D" id="2.40.50.150">
    <property type="match status" value="1"/>
</dbReference>
<dbReference type="Gene3D" id="3.90.1100.10">
    <property type="match status" value="3"/>
</dbReference>
<dbReference type="Gene3D" id="2.40.270.10">
    <property type="entry name" value="DNA-directed RNA polymerase, subunit 2, domain 6"/>
    <property type="match status" value="1"/>
</dbReference>
<dbReference type="Gene3D" id="3.90.1800.10">
    <property type="entry name" value="RNA polymerase alpha subunit dimerisation domain"/>
    <property type="match status" value="1"/>
</dbReference>
<dbReference type="Gene3D" id="3.90.1110.10">
    <property type="entry name" value="RNA polymerase Rpb2, domain 2"/>
    <property type="match status" value="1"/>
</dbReference>
<dbReference type="HAMAP" id="MF_01321">
    <property type="entry name" value="RNApol_bact_RpoB"/>
    <property type="match status" value="1"/>
</dbReference>
<dbReference type="InterPro" id="IPR019462">
    <property type="entry name" value="DNA-dir_RNA_pol_bsu_external_1"/>
</dbReference>
<dbReference type="InterPro" id="IPR015712">
    <property type="entry name" value="DNA-dir_RNA_pol_su2"/>
</dbReference>
<dbReference type="InterPro" id="IPR007120">
    <property type="entry name" value="DNA-dir_RNAP_su2_dom"/>
</dbReference>
<dbReference type="InterPro" id="IPR037033">
    <property type="entry name" value="DNA-dir_RNAP_su2_hyb_sf"/>
</dbReference>
<dbReference type="InterPro" id="IPR010243">
    <property type="entry name" value="RNA_pol_bsu_bac"/>
</dbReference>
<dbReference type="InterPro" id="IPR007121">
    <property type="entry name" value="RNA_pol_bsu_CS"/>
</dbReference>
<dbReference type="InterPro" id="IPR007644">
    <property type="entry name" value="RNA_pol_bsu_protrusion"/>
</dbReference>
<dbReference type="InterPro" id="IPR007642">
    <property type="entry name" value="RNA_pol_Rpb2_2"/>
</dbReference>
<dbReference type="InterPro" id="IPR037034">
    <property type="entry name" value="RNA_pol_Rpb2_2_sf"/>
</dbReference>
<dbReference type="InterPro" id="IPR007645">
    <property type="entry name" value="RNA_pol_Rpb2_3"/>
</dbReference>
<dbReference type="InterPro" id="IPR007641">
    <property type="entry name" value="RNA_pol_Rpb2_7"/>
</dbReference>
<dbReference type="InterPro" id="IPR014724">
    <property type="entry name" value="RNA_pol_RPB2_OB-fold"/>
</dbReference>
<dbReference type="NCBIfam" id="NF001616">
    <property type="entry name" value="PRK00405.1"/>
    <property type="match status" value="1"/>
</dbReference>
<dbReference type="NCBIfam" id="TIGR02013">
    <property type="entry name" value="rpoB"/>
    <property type="match status" value="1"/>
</dbReference>
<dbReference type="PANTHER" id="PTHR20856">
    <property type="entry name" value="DNA-DIRECTED RNA POLYMERASE I SUBUNIT 2"/>
    <property type="match status" value="1"/>
</dbReference>
<dbReference type="Pfam" id="PF04563">
    <property type="entry name" value="RNA_pol_Rpb2_1"/>
    <property type="match status" value="1"/>
</dbReference>
<dbReference type="Pfam" id="PF04561">
    <property type="entry name" value="RNA_pol_Rpb2_2"/>
    <property type="match status" value="2"/>
</dbReference>
<dbReference type="Pfam" id="PF04565">
    <property type="entry name" value="RNA_pol_Rpb2_3"/>
    <property type="match status" value="1"/>
</dbReference>
<dbReference type="Pfam" id="PF10385">
    <property type="entry name" value="RNA_pol_Rpb2_45"/>
    <property type="match status" value="1"/>
</dbReference>
<dbReference type="Pfam" id="PF00562">
    <property type="entry name" value="RNA_pol_Rpb2_6"/>
    <property type="match status" value="1"/>
</dbReference>
<dbReference type="Pfam" id="PF04560">
    <property type="entry name" value="RNA_pol_Rpb2_7"/>
    <property type="match status" value="1"/>
</dbReference>
<dbReference type="SUPFAM" id="SSF64484">
    <property type="entry name" value="beta and beta-prime subunits of DNA dependent RNA-polymerase"/>
    <property type="match status" value="1"/>
</dbReference>
<dbReference type="PROSITE" id="PS01166">
    <property type="entry name" value="RNA_POL_BETA"/>
    <property type="match status" value="1"/>
</dbReference>
<protein>
    <recommendedName>
        <fullName evidence="1">DNA-directed RNA polymerase subunit beta</fullName>
        <shortName evidence="1">RNAP subunit beta</shortName>
        <ecNumber evidence="1">2.7.7.6</ecNumber>
    </recommendedName>
    <alternativeName>
        <fullName evidence="1">RNA polymerase subunit beta</fullName>
    </alternativeName>
    <alternativeName>
        <fullName evidence="1">Transcriptase subunit beta</fullName>
    </alternativeName>
</protein>
<reference key="1">
    <citation type="journal article" date="2006" name="PLoS Biol.">
        <title>Metabolic complementarity and genomics of the dual bacterial symbiosis of sharpshooters.</title>
        <authorList>
            <person name="Wu D."/>
            <person name="Daugherty S.C."/>
            <person name="Van Aken S.E."/>
            <person name="Pai G.H."/>
            <person name="Watkins K.L."/>
            <person name="Khouri H."/>
            <person name="Tallon L.J."/>
            <person name="Zaborsky J.M."/>
            <person name="Dunbar H.E."/>
            <person name="Tran P.L."/>
            <person name="Moran N.A."/>
            <person name="Eisen J.A."/>
        </authorList>
    </citation>
    <scope>NUCLEOTIDE SEQUENCE [LARGE SCALE GENOMIC DNA]</scope>
</reference>
<sequence length="1340" mass="151516">MLYSYTEKKRIRKDFGKRSQVLDVPYLLSIQLESFQKFIERDNEGQHGLEAAFRSVFPIQSYSGNAELQYVSYHLGEPVFDVKECQTRGLTFSAPLRVILRLIIRDATTETPIKEQEVYMGEIPLMTENGTFVINGTERVIVSQLHRSPGVFFDSDKGKIHSSGKVLFNARIIPYRGSWLDFEFDQKDHLFVRIDRRRKLPATIILRALQLSTNQILDTFFEKVIFHLNDEHIQMELVPERLRGETASFDIIANGTIYVNKGRRITARHIHQLKIDSIDRINVPREYLVGKIIAIDYIHDNTGEIIVPANIEITLEILDKLGKANFKRIETLFTNDLDHGAYISETLRIDSTRDRLSALVEIYRMMRPGEPPTREAAENLFENIFFSEDRYDLSAVGRMKFNRALLREEIEGSGLLSKSDIIEVMKKLIDIRNGKGEVDDIDHLGNRRVRSVGEMAENQFRIGLVRVERAVKERLSLSDLESLMPQDIINAKPISAAIKEFFGSSQLSQFMDQNNPLSEITHKRRISALGPGGLTRERAGFEVRDVHPTHYGRVCPIETPEGPNIGLINSLSVYAKTNEYGFLETPYRLVHNSVVTEEIHYLSAIEEGNFIIAQANTNLDDKGNFVEELVTCRHKGESGFFSREKVHYMDVSTQQIVSVGASLIPFLEHDDANRALMGANMQRQAVPTLRTDKPLVGTGMERIVAVDSGVTVVAKRGGIVQYVDASRIVINVHSDEMYSGEAGIDIYHMTKYIRSNQNTCISQKPCVTLGELVERGNVLADGPSTDLGELALGQNMRIAFMPWNGYNFEDSMLVSERVVQKDCFTTIHIQELACMSRDTKLGPEEITSDIPNVGEAALCKLDESGIVYIGAEVTSGDILVGKVTPKGETQLTPEEKLLRAIFGEKASDVKDSSLRVPNGYSGTVIDVQIFTRDGVKKDKRTLEIEEMQLQQAKKDLTEERRIFEAALFTRIRHVLGSDITNIDIVKILKLKREDWSQFNIKDNNKYCQLEQLAEQYYELNKVFANKLEEKRRKITQGDDLSPGVLKIVKVYIAVKRQIQPGDKMAGRHGNKGVISKINPIEDMPYDEKGIPVDIVLNPLGVPSRMNIGQILETHLGMAAKGIGDKINKMLKQHKNAEQLRQFIQKAYDIGDQVRQKVNLNLFSDQEILLLAENLKHGMPMATPVFDGAKEKEIKQMLQLAELPVSGQITLFDGRTGEPFERQVTVGYMYMLKLNHLVDDKMHARSTGSYSLVTQQPLGGKAQFGGQRFGEMEVWALEAYGAAYTLQEMLTVKSDDVNGRTKMYKNIVDCNHTMEPAMPESFNVLLKEIRSLGINIELEKN</sequence>
<evidence type="ECO:0000255" key="1">
    <source>
        <dbReference type="HAMAP-Rule" id="MF_01321"/>
    </source>
</evidence>
<feature type="chain" id="PRO_0000300283" description="DNA-directed RNA polymerase subunit beta">
    <location>
        <begin position="1"/>
        <end position="1340"/>
    </location>
</feature>
<gene>
    <name evidence="1" type="primary">rpoB</name>
    <name type="ordered locus">BCI_0502</name>
</gene>
<accession>Q1LSX7</accession>